<keyword id="KW-0998">Cell outer membrane</keyword>
<keyword id="KW-0378">Hydrolase</keyword>
<keyword id="KW-0449">Lipoprotein</keyword>
<keyword id="KW-0460">Magnesium</keyword>
<keyword id="KW-0472">Membrane</keyword>
<keyword id="KW-0479">Metal-binding</keyword>
<keyword id="KW-0547">Nucleotide-binding</keyword>
<keyword id="KW-0564">Palmitate</keyword>
<keyword id="KW-0732">Signal</keyword>
<accession>P22848</accession>
<comment type="function">
    <text>Degradation of extracellular 5'-nucleotides for nutritional needs.</text>
</comment>
<comment type="catalytic activity">
    <reaction>
        <text>a ribonucleoside 5'-phosphate + H2O = a ribonucleoside + phosphate</text>
        <dbReference type="Rhea" id="RHEA:12484"/>
        <dbReference type="ChEBI" id="CHEBI:15377"/>
        <dbReference type="ChEBI" id="CHEBI:18254"/>
        <dbReference type="ChEBI" id="CHEBI:43474"/>
        <dbReference type="ChEBI" id="CHEBI:58043"/>
        <dbReference type="EC" id="3.1.3.5"/>
    </reaction>
</comment>
<comment type="cofactor">
    <cofactor>
        <name>chloride</name>
        <dbReference type="ChEBI" id="CHEBI:17996"/>
    </cofactor>
    <text>Chloride.</text>
</comment>
<comment type="cofactor">
    <cofactor>
        <name>Mg(2+)</name>
        <dbReference type="ChEBI" id="CHEBI:18420"/>
    </cofactor>
</comment>
<comment type="subcellular location">
    <subcellularLocation>
        <location evidence="3">Cell outer membrane</location>
        <topology evidence="3">Lipid-anchor</topology>
    </subcellularLocation>
</comment>
<comment type="similarity">
    <text evidence="3">Belongs to the 5'-nucleotidase family.</text>
</comment>
<dbReference type="EC" id="3.1.3.5"/>
<dbReference type="EMBL" id="X57711">
    <property type="protein sequence ID" value="CAA40882.1"/>
    <property type="molecule type" value="Genomic_DNA"/>
</dbReference>
<dbReference type="EMBL" id="D00910">
    <property type="protein sequence ID" value="BAA00756.1"/>
    <property type="molecule type" value="Genomic_DNA"/>
</dbReference>
<dbReference type="EMBL" id="BA000031">
    <property type="protein sequence ID" value="BAC59011.1"/>
    <property type="molecule type" value="Genomic_DNA"/>
</dbReference>
<dbReference type="PIR" id="JX0153">
    <property type="entry name" value="JX0153"/>
</dbReference>
<dbReference type="RefSeq" id="NP_797127.1">
    <property type="nucleotide sequence ID" value="NC_004603.1"/>
</dbReference>
<dbReference type="SMR" id="P22848"/>
<dbReference type="GeneID" id="1188243"/>
<dbReference type="KEGG" id="vpa:VP0748"/>
<dbReference type="PATRIC" id="fig|223926.6.peg.715"/>
<dbReference type="eggNOG" id="COG0737">
    <property type="taxonomic scope" value="Bacteria"/>
</dbReference>
<dbReference type="HOGENOM" id="CLU_005854_7_0_6"/>
<dbReference type="Proteomes" id="UP000002493">
    <property type="component" value="Chromosome 1"/>
</dbReference>
<dbReference type="GO" id="GO:0009279">
    <property type="term" value="C:cell outer membrane"/>
    <property type="evidence" value="ECO:0007669"/>
    <property type="project" value="UniProtKB-SubCell"/>
</dbReference>
<dbReference type="GO" id="GO:0030288">
    <property type="term" value="C:outer membrane-bounded periplasmic space"/>
    <property type="evidence" value="ECO:0007669"/>
    <property type="project" value="TreeGrafter"/>
</dbReference>
<dbReference type="GO" id="GO:0008253">
    <property type="term" value="F:5'-nucleotidase activity"/>
    <property type="evidence" value="ECO:0007669"/>
    <property type="project" value="UniProtKB-EC"/>
</dbReference>
<dbReference type="GO" id="GO:0046872">
    <property type="term" value="F:metal ion binding"/>
    <property type="evidence" value="ECO:0007669"/>
    <property type="project" value="UniProtKB-KW"/>
</dbReference>
<dbReference type="GO" id="GO:0000166">
    <property type="term" value="F:nucleotide binding"/>
    <property type="evidence" value="ECO:0007669"/>
    <property type="project" value="UniProtKB-KW"/>
</dbReference>
<dbReference type="GO" id="GO:0008768">
    <property type="term" value="F:UDP-sugar diphosphatase activity"/>
    <property type="evidence" value="ECO:0007669"/>
    <property type="project" value="TreeGrafter"/>
</dbReference>
<dbReference type="GO" id="GO:0009166">
    <property type="term" value="P:nucleotide catabolic process"/>
    <property type="evidence" value="ECO:0007669"/>
    <property type="project" value="InterPro"/>
</dbReference>
<dbReference type="FunFam" id="3.60.21.10:FF:000025">
    <property type="entry name" value="Protein UshA"/>
    <property type="match status" value="1"/>
</dbReference>
<dbReference type="FunFam" id="3.90.780.10:FF:000003">
    <property type="entry name" value="Protein UshA"/>
    <property type="match status" value="1"/>
</dbReference>
<dbReference type="Gene3D" id="3.60.21.10">
    <property type="match status" value="1"/>
</dbReference>
<dbReference type="Gene3D" id="3.90.780.10">
    <property type="entry name" value="5'-Nucleotidase, C-terminal domain"/>
    <property type="match status" value="1"/>
</dbReference>
<dbReference type="InterPro" id="IPR008334">
    <property type="entry name" value="5'-Nucleotdase_C"/>
</dbReference>
<dbReference type="InterPro" id="IPR036907">
    <property type="entry name" value="5'-Nucleotdase_C_sf"/>
</dbReference>
<dbReference type="InterPro" id="IPR006146">
    <property type="entry name" value="5'-Nucleotdase_CS"/>
</dbReference>
<dbReference type="InterPro" id="IPR006179">
    <property type="entry name" value="5_nucleotidase/apyrase"/>
</dbReference>
<dbReference type="InterPro" id="IPR004843">
    <property type="entry name" value="Calcineurin-like_PHP_ApaH"/>
</dbReference>
<dbReference type="InterPro" id="IPR029052">
    <property type="entry name" value="Metallo-depent_PP-like"/>
</dbReference>
<dbReference type="NCBIfam" id="NF007109">
    <property type="entry name" value="PRK09558.1"/>
    <property type="match status" value="1"/>
</dbReference>
<dbReference type="PANTHER" id="PTHR11575">
    <property type="entry name" value="5'-NUCLEOTIDASE-RELATED"/>
    <property type="match status" value="1"/>
</dbReference>
<dbReference type="PANTHER" id="PTHR11575:SF46">
    <property type="entry name" value="PROTEIN USHA"/>
    <property type="match status" value="1"/>
</dbReference>
<dbReference type="Pfam" id="PF02872">
    <property type="entry name" value="5_nucleotid_C"/>
    <property type="match status" value="1"/>
</dbReference>
<dbReference type="Pfam" id="PF00149">
    <property type="entry name" value="Metallophos"/>
    <property type="match status" value="1"/>
</dbReference>
<dbReference type="PRINTS" id="PR01607">
    <property type="entry name" value="APYRASEFAMLY"/>
</dbReference>
<dbReference type="SUPFAM" id="SSF55816">
    <property type="entry name" value="5'-nucleotidase (syn. UDP-sugar hydrolase), C-terminal domain"/>
    <property type="match status" value="1"/>
</dbReference>
<dbReference type="SUPFAM" id="SSF56300">
    <property type="entry name" value="Metallo-dependent phosphatases"/>
    <property type="match status" value="1"/>
</dbReference>
<dbReference type="PROSITE" id="PS00785">
    <property type="entry name" value="5_NUCLEOTIDASE_1"/>
    <property type="match status" value="1"/>
</dbReference>
<dbReference type="PROSITE" id="PS00786">
    <property type="entry name" value="5_NUCLEOTIDASE_2"/>
    <property type="match status" value="1"/>
</dbReference>
<dbReference type="PROSITE" id="PS51257">
    <property type="entry name" value="PROKAR_LIPOPROTEIN"/>
    <property type="match status" value="1"/>
</dbReference>
<organism>
    <name type="scientific">Vibrio parahaemolyticus serotype O3:K6 (strain RIMD 2210633)</name>
    <dbReference type="NCBI Taxonomy" id="223926"/>
    <lineage>
        <taxon>Bacteria</taxon>
        <taxon>Pseudomonadati</taxon>
        <taxon>Pseudomonadota</taxon>
        <taxon>Gammaproteobacteria</taxon>
        <taxon>Vibrionales</taxon>
        <taxon>Vibrionaceae</taxon>
        <taxon>Vibrio</taxon>
    </lineage>
</organism>
<protein>
    <recommendedName>
        <fullName>5'-nucleotidase</fullName>
        <ecNumber>3.1.3.5</ecNumber>
    </recommendedName>
</protein>
<reference key="1">
    <citation type="journal article" date="1991" name="J. Biochem.">
        <title>Sequence analysis of nutA gene encoding membrane-bound Cl(-)-dependent 5'-nucleotidase of Vibrio parahaemolyticus.</title>
        <authorList>
            <person name="Tamao Y."/>
            <person name="Noguchi K."/>
            <person name="Sakai-Tomita Y."/>
            <person name="Hama H."/>
            <person name="Shimamoto T."/>
            <person name="Kanazawa H."/>
            <person name="Tsuda M."/>
            <person name="Tsuchiya T."/>
        </authorList>
    </citation>
    <scope>NUCLEOTIDE SEQUENCE [GENOMIC DNA]</scope>
    <source>
        <strain>AQ3334</strain>
    </source>
</reference>
<reference key="2">
    <citation type="journal article" date="2003" name="Lancet">
        <title>Genome sequence of Vibrio parahaemolyticus: a pathogenic mechanism distinct from that of V. cholerae.</title>
        <authorList>
            <person name="Makino K."/>
            <person name="Oshima K."/>
            <person name="Kurokawa K."/>
            <person name="Yokoyama K."/>
            <person name="Uda T."/>
            <person name="Tagomori K."/>
            <person name="Iijima Y."/>
            <person name="Najima M."/>
            <person name="Nakano M."/>
            <person name="Yamashita A."/>
            <person name="Kubota Y."/>
            <person name="Kimura S."/>
            <person name="Yasunaga T."/>
            <person name="Honda T."/>
            <person name="Shinagawa H."/>
            <person name="Hattori M."/>
            <person name="Iida T."/>
        </authorList>
    </citation>
    <scope>NUCLEOTIDE SEQUENCE [LARGE SCALE GENOMIC DNA]</scope>
    <source>
        <strain>RIMD 2210633</strain>
    </source>
</reference>
<feature type="signal peptide" evidence="2">
    <location>
        <begin position="1"/>
        <end position="21"/>
    </location>
</feature>
<feature type="chain" id="PRO_0000000029" description="5'-nucleotidase">
    <location>
        <begin position="22"/>
        <end position="560"/>
    </location>
</feature>
<feature type="binding site" evidence="1">
    <location>
        <position position="45"/>
    </location>
    <ligand>
        <name>a divalent metal cation</name>
        <dbReference type="ChEBI" id="CHEBI:60240"/>
        <label>1</label>
    </ligand>
</feature>
<feature type="binding site" evidence="1">
    <location>
        <position position="47"/>
    </location>
    <ligand>
        <name>a divalent metal cation</name>
        <dbReference type="ChEBI" id="CHEBI:60240"/>
        <label>1</label>
    </ligand>
</feature>
<feature type="binding site" evidence="1">
    <location>
        <position position="88"/>
    </location>
    <ligand>
        <name>a divalent metal cation</name>
        <dbReference type="ChEBI" id="CHEBI:60240"/>
        <label>1</label>
    </ligand>
</feature>
<feature type="binding site" evidence="1">
    <location>
        <position position="88"/>
    </location>
    <ligand>
        <name>a divalent metal cation</name>
        <dbReference type="ChEBI" id="CHEBI:60240"/>
        <label>2</label>
    </ligand>
</feature>
<feature type="binding site" evidence="1">
    <location>
        <position position="120"/>
    </location>
    <ligand>
        <name>a divalent metal cation</name>
        <dbReference type="ChEBI" id="CHEBI:60240"/>
        <label>2</label>
    </ligand>
</feature>
<feature type="binding site" evidence="1">
    <location>
        <position position="221"/>
    </location>
    <ligand>
        <name>a divalent metal cation</name>
        <dbReference type="ChEBI" id="CHEBI:60240"/>
        <label>2</label>
    </ligand>
</feature>
<feature type="binding site" evidence="1">
    <location>
        <position position="256"/>
    </location>
    <ligand>
        <name>a divalent metal cation</name>
        <dbReference type="ChEBI" id="CHEBI:60240"/>
        <label>2</label>
    </ligand>
</feature>
<feature type="binding site" evidence="1">
    <location>
        <position position="258"/>
    </location>
    <ligand>
        <name>a divalent metal cation</name>
        <dbReference type="ChEBI" id="CHEBI:60240"/>
        <label>1</label>
    </ligand>
</feature>
<feature type="binding site" evidence="1">
    <location>
        <position position="432"/>
    </location>
    <ligand>
        <name>substrate</name>
    </ligand>
</feature>
<feature type="binding site" evidence="1">
    <location>
        <begin position="501"/>
        <end position="507"/>
    </location>
    <ligand>
        <name>substrate</name>
    </ligand>
</feature>
<feature type="site" description="Transition state stabilizer" evidence="1">
    <location>
        <position position="121"/>
    </location>
</feature>
<feature type="site" description="Transition state stabilizer" evidence="1">
    <location>
        <position position="124"/>
    </location>
</feature>
<feature type="lipid moiety-binding region" description="N-palmitoyl cysteine" evidence="3">
    <location>
        <position position="22"/>
    </location>
</feature>
<feature type="lipid moiety-binding region" description="S-diacylglycerol cysteine" evidence="3">
    <location>
        <position position="22"/>
    </location>
</feature>
<feature type="sequence conflict" description="In Ref. 1; CAA40882/BAA00756." evidence="3" ref="1">
    <original>V</original>
    <variation>A</variation>
    <location>
        <position position="198"/>
    </location>
</feature>
<proteinExistence type="inferred from homology"/>
<name>5NTD_VIBPA</name>
<sequence>MNQRLIIKTALSAAILASLAGCASQPAHEWNADTTYKLTVLHTNDHHGRFWQNKHGEYGMAARKTLIDDLRDEIQAEGGSVLLLSGGDINTGVPESDLQDAEPDFKGMSKIGYDAMALGNHEFDNPLDVLFKQQDWANFPMLSANIYDKKTGKRLFQPYAMFNKQGIKIAVIGLTTEDTAKLGNPEFIGQVDFRDPKVEAKELIAELKKTENPDLIFAVTHMGHYENGNRGINAPGDVALARYLNEGDLDMIVGGHSQEPVCMEGPNVIKKNFKPGDECQPDQQNGTYIVQAHEWGKYVGRADYEFRNGELSMVSYDLIPVNLKKKINVDGQSQRVFVQDEITQDKAMLDFLRPFQEKGQSQLNVKIAESNGKLEGDRDVVRFQQTNLGRLIATAHMERAKADFAVMNSGGVRDSIEAGDITYKDVLTVQPFGNMVSYVDMSGQEVLDYLNIVATKPVDSGAYAQFAGISMRIENDKVTNVFIGNKQLRLDGRYRFTVPSYNASGGDGYPKIDTHPGYVNTGFTDAEVLKDYLESHSPIDVNEYAPSGEVMYQTNNVVNQ</sequence>
<evidence type="ECO:0000250" key="1"/>
<evidence type="ECO:0000255" key="2">
    <source>
        <dbReference type="PROSITE-ProRule" id="PRU00303"/>
    </source>
</evidence>
<evidence type="ECO:0000305" key="3"/>
<gene>
    <name type="primary">nutA</name>
    <name type="ordered locus">VP0748</name>
</gene>